<gene>
    <name type="ordered locus">Swoo_1749</name>
</gene>
<organism>
    <name type="scientific">Shewanella woodyi (strain ATCC 51908 / MS32)</name>
    <dbReference type="NCBI Taxonomy" id="392500"/>
    <lineage>
        <taxon>Bacteria</taxon>
        <taxon>Pseudomonadati</taxon>
        <taxon>Pseudomonadota</taxon>
        <taxon>Gammaproteobacteria</taxon>
        <taxon>Alteromonadales</taxon>
        <taxon>Shewanellaceae</taxon>
        <taxon>Shewanella</taxon>
    </lineage>
</organism>
<reference key="1">
    <citation type="submission" date="2008-02" db="EMBL/GenBank/DDBJ databases">
        <title>Complete sequence of Shewanella woodyi ATCC 51908.</title>
        <authorList>
            <consortium name="US DOE Joint Genome Institute"/>
            <person name="Copeland A."/>
            <person name="Lucas S."/>
            <person name="Lapidus A."/>
            <person name="Glavina del Rio T."/>
            <person name="Dalin E."/>
            <person name="Tice H."/>
            <person name="Bruce D."/>
            <person name="Goodwin L."/>
            <person name="Pitluck S."/>
            <person name="Sims D."/>
            <person name="Brettin T."/>
            <person name="Detter J.C."/>
            <person name="Han C."/>
            <person name="Kuske C.R."/>
            <person name="Schmutz J."/>
            <person name="Larimer F."/>
            <person name="Land M."/>
            <person name="Hauser L."/>
            <person name="Kyrpides N."/>
            <person name="Lykidis A."/>
            <person name="Zhao J.-S."/>
            <person name="Richardson P."/>
        </authorList>
    </citation>
    <scope>NUCLEOTIDE SEQUENCE [LARGE SCALE GENOMIC DNA]</scope>
    <source>
        <strain>ATCC 51908 / MS32</strain>
    </source>
</reference>
<evidence type="ECO:0000250" key="1"/>
<evidence type="ECO:0000255" key="2">
    <source>
        <dbReference type="PROSITE-ProRule" id="PRU00648"/>
    </source>
</evidence>
<evidence type="ECO:0000305" key="3"/>
<protein>
    <recommendedName>
        <fullName>Glycosyl hydrolase family 109 protein</fullName>
        <ecNumber>3.2.1.-</ecNumber>
    </recommendedName>
</protein>
<feature type="signal peptide" description="Tat-type signal" evidence="2">
    <location>
        <begin position="1"/>
        <end position="31"/>
    </location>
</feature>
<feature type="chain" id="PRO_5000317251" description="Glycosyl hydrolase family 109 protein">
    <location>
        <begin position="32"/>
        <end position="467"/>
    </location>
</feature>
<feature type="binding site" evidence="1">
    <location>
        <begin position="66"/>
        <end position="67"/>
    </location>
    <ligand>
        <name>NAD(+)</name>
        <dbReference type="ChEBI" id="CHEBI:57540"/>
    </ligand>
</feature>
<feature type="binding site" evidence="1">
    <location>
        <position position="88"/>
    </location>
    <ligand>
        <name>NAD(+)</name>
        <dbReference type="ChEBI" id="CHEBI:57540"/>
    </ligand>
</feature>
<feature type="binding site" evidence="1">
    <location>
        <begin position="137"/>
        <end position="140"/>
    </location>
    <ligand>
        <name>NAD(+)</name>
        <dbReference type="ChEBI" id="CHEBI:57540"/>
    </ligand>
</feature>
<feature type="binding site" evidence="1">
    <location>
        <begin position="157"/>
        <end position="158"/>
    </location>
    <ligand>
        <name>NAD(+)</name>
        <dbReference type="ChEBI" id="CHEBI:57540"/>
    </ligand>
</feature>
<feature type="binding site" evidence="1">
    <location>
        <position position="186"/>
    </location>
    <ligand>
        <name>NAD(+)</name>
        <dbReference type="ChEBI" id="CHEBI:57540"/>
    </ligand>
</feature>
<feature type="binding site" evidence="1">
    <location>
        <position position="215"/>
    </location>
    <ligand>
        <name>substrate</name>
    </ligand>
</feature>
<feature type="binding site" evidence="1">
    <location>
        <position position="234"/>
    </location>
    <ligand>
        <name>substrate</name>
    </ligand>
</feature>
<feature type="binding site" evidence="1">
    <location>
        <begin position="246"/>
        <end position="249"/>
    </location>
    <ligand>
        <name>substrate</name>
    </ligand>
</feature>
<feature type="binding site" evidence="1">
    <location>
        <position position="246"/>
    </location>
    <ligand>
        <name>NAD(+)</name>
        <dbReference type="ChEBI" id="CHEBI:57540"/>
    </ligand>
</feature>
<feature type="binding site" evidence="1">
    <location>
        <position position="328"/>
    </location>
    <ligand>
        <name>substrate</name>
    </ligand>
</feature>
<keyword id="KW-0326">Glycosidase</keyword>
<keyword id="KW-0378">Hydrolase</keyword>
<keyword id="KW-0520">NAD</keyword>
<keyword id="KW-1185">Reference proteome</keyword>
<keyword id="KW-0732">Signal</keyword>
<name>GH109_SHEWM</name>
<proteinExistence type="inferred from homology"/>
<dbReference type="EC" id="3.2.1.-"/>
<dbReference type="EMBL" id="CP000961">
    <property type="protein sequence ID" value="ACA86034.1"/>
    <property type="molecule type" value="Genomic_DNA"/>
</dbReference>
<dbReference type="RefSeq" id="WP_012324380.1">
    <property type="nucleotide sequence ID" value="NC_010506.1"/>
</dbReference>
<dbReference type="SMR" id="B1KNF7"/>
<dbReference type="STRING" id="392500.Swoo_1749"/>
<dbReference type="CAZy" id="GH109">
    <property type="family name" value="Glycoside Hydrolase Family 109"/>
</dbReference>
<dbReference type="KEGG" id="swd:Swoo_1749"/>
<dbReference type="eggNOG" id="COG0673">
    <property type="taxonomic scope" value="Bacteria"/>
</dbReference>
<dbReference type="HOGENOM" id="CLU_046965_0_0_6"/>
<dbReference type="Proteomes" id="UP000002168">
    <property type="component" value="Chromosome"/>
</dbReference>
<dbReference type="GO" id="GO:0016798">
    <property type="term" value="F:hydrolase activity, acting on glycosyl bonds"/>
    <property type="evidence" value="ECO:0007669"/>
    <property type="project" value="UniProtKB-KW"/>
</dbReference>
<dbReference type="GO" id="GO:0000166">
    <property type="term" value="F:nucleotide binding"/>
    <property type="evidence" value="ECO:0007669"/>
    <property type="project" value="InterPro"/>
</dbReference>
<dbReference type="Gene3D" id="3.30.360.10">
    <property type="entry name" value="Dihydrodipicolinate Reductase, domain 2"/>
    <property type="match status" value="1"/>
</dbReference>
<dbReference type="Gene3D" id="3.40.50.720">
    <property type="entry name" value="NAD(P)-binding Rossmann-like Domain"/>
    <property type="match status" value="1"/>
</dbReference>
<dbReference type="InterPro" id="IPR000683">
    <property type="entry name" value="Gfo/Idh/MocA-like_OxRdtase_N"/>
</dbReference>
<dbReference type="InterPro" id="IPR050463">
    <property type="entry name" value="Gfo/Idh/MocA_oxidrdct_glycsds"/>
</dbReference>
<dbReference type="InterPro" id="IPR049303">
    <property type="entry name" value="Glyco_hydro_109_C"/>
</dbReference>
<dbReference type="InterPro" id="IPR036291">
    <property type="entry name" value="NAD(P)-bd_dom_sf"/>
</dbReference>
<dbReference type="InterPro" id="IPR006311">
    <property type="entry name" value="TAT_signal"/>
</dbReference>
<dbReference type="InterPro" id="IPR019546">
    <property type="entry name" value="TAT_signal_bac_arc"/>
</dbReference>
<dbReference type="NCBIfam" id="TIGR01409">
    <property type="entry name" value="TAT_signal_seq"/>
    <property type="match status" value="1"/>
</dbReference>
<dbReference type="PANTHER" id="PTHR43818">
    <property type="entry name" value="BCDNA.GH03377"/>
    <property type="match status" value="1"/>
</dbReference>
<dbReference type="PANTHER" id="PTHR43818:SF1">
    <property type="entry name" value="GLYCOSYL HYDROLASE FAMILY 109 PROTEIN"/>
    <property type="match status" value="1"/>
</dbReference>
<dbReference type="Pfam" id="PF01408">
    <property type="entry name" value="GFO_IDH_MocA"/>
    <property type="match status" value="1"/>
</dbReference>
<dbReference type="Pfam" id="PF21252">
    <property type="entry name" value="Glyco_hydro_109_C"/>
    <property type="match status" value="1"/>
</dbReference>
<dbReference type="SUPFAM" id="SSF51735">
    <property type="entry name" value="NAD(P)-binding Rossmann-fold domains"/>
    <property type="match status" value="1"/>
</dbReference>
<dbReference type="PROSITE" id="PS51318">
    <property type="entry name" value="TAT"/>
    <property type="match status" value="1"/>
</dbReference>
<accession>B1KNF7</accession>
<comment type="function">
    <text evidence="1">Glycosidase.</text>
</comment>
<comment type="cofactor">
    <cofactor evidence="1">
        <name>NAD(+)</name>
        <dbReference type="ChEBI" id="CHEBI:57540"/>
    </cofactor>
    <text evidence="1">Binds 1 NAD(+) per subunit. The NAD(+) cannot dissociate.</text>
</comment>
<comment type="PTM">
    <text>Predicted to be exported by the Tat system. The position of the signal peptide cleavage has not been experimentally proven.</text>
</comment>
<comment type="similarity">
    <text evidence="3">Belongs to the Gfo/Idh/MocA family. Glycosyl hydrolase 109 subfamily.</text>
</comment>
<sequence length="467" mass="52860">MKNFNRRAFLKAAGATTAGLVTSGLILPASAQPQKMPPKPSNGKSVMGLISPKLSTVRVGFIGVGQRGYGHVKHFCHLEGVEIKAICDTDPAVLDRAIDFVVEQGLAKPNAYTGSEHTYRDMLQRDDIDIAIISTPWQWHAPMAIDTMENDKHAFVEVPLAMSVEECWQIVDTAERTQKNCMMMENVNYGRDELMVLNMVRQGVFGELIHGEAAYIHELRWQMKELESKTGSWRTHWHTKRNGNLYPTHGLGPVSQYMNINRGDRFDYLTSMSSPALGRALYAKREFPADHERNQLNYINGDMSTSLIKTVKGRTIMVQHDTTTPRPYSRHNLIQGTNGVFAGFPNRIALEQSPFERDEKGGESFHRWDMDMTRWYDKYDHPLWQQMGKEAERNGGHGGMDFLMLWRMVYCLRNAEPLDQDVYDGAAWSVVNILSEESVNNRSNSVTFPDFTRGAWKTGKPLGIVGA</sequence>